<organism>
    <name type="scientific">Yersinia pestis bv. Antiqua (strain Antiqua)</name>
    <dbReference type="NCBI Taxonomy" id="360102"/>
    <lineage>
        <taxon>Bacteria</taxon>
        <taxon>Pseudomonadati</taxon>
        <taxon>Pseudomonadota</taxon>
        <taxon>Gammaproteobacteria</taxon>
        <taxon>Enterobacterales</taxon>
        <taxon>Yersiniaceae</taxon>
        <taxon>Yersinia</taxon>
    </lineage>
</organism>
<reference key="1">
    <citation type="journal article" date="2006" name="J. Bacteriol.">
        <title>Complete genome sequence of Yersinia pestis strains Antiqua and Nepal516: evidence of gene reduction in an emerging pathogen.</title>
        <authorList>
            <person name="Chain P.S.G."/>
            <person name="Hu P."/>
            <person name="Malfatti S.A."/>
            <person name="Radnedge L."/>
            <person name="Larimer F."/>
            <person name="Vergez L.M."/>
            <person name="Worsham P."/>
            <person name="Chu M.C."/>
            <person name="Andersen G.L."/>
        </authorList>
    </citation>
    <scope>NUCLEOTIDE SEQUENCE [LARGE SCALE GENOMIC DNA]</scope>
    <source>
        <strain>Antiqua</strain>
    </source>
</reference>
<proteinExistence type="inferred from homology"/>
<evidence type="ECO:0000255" key="1">
    <source>
        <dbReference type="HAMAP-Rule" id="MF_00391"/>
    </source>
</evidence>
<evidence type="ECO:0000256" key="2">
    <source>
        <dbReference type="SAM" id="MobiDB-lite"/>
    </source>
</evidence>
<evidence type="ECO:0000305" key="3"/>
<feature type="chain" id="PRO_1000013496" description="Large ribosomal subunit protein bL34">
    <location>
        <begin position="1"/>
        <end position="46"/>
    </location>
</feature>
<feature type="region of interest" description="Disordered" evidence="2">
    <location>
        <begin position="26"/>
        <end position="46"/>
    </location>
</feature>
<feature type="compositionally biased region" description="Basic residues" evidence="2">
    <location>
        <begin position="31"/>
        <end position="40"/>
    </location>
</feature>
<sequence>MKRTFQPSVLKRNRSHGFRARMATKNGRQVLARRRAKSRSRLTVSK</sequence>
<protein>
    <recommendedName>
        <fullName evidence="1">Large ribosomal subunit protein bL34</fullName>
    </recommendedName>
    <alternativeName>
        <fullName evidence="3">50S ribosomal protein L34</fullName>
    </alternativeName>
</protein>
<accession>Q1C0B7</accession>
<keyword id="KW-0687">Ribonucleoprotein</keyword>
<keyword id="KW-0689">Ribosomal protein</keyword>
<comment type="similarity">
    <text evidence="1">Belongs to the bacterial ribosomal protein bL34 family.</text>
</comment>
<gene>
    <name evidence="1" type="primary">rpmH</name>
    <name type="ordered locus">YPA_4144</name>
</gene>
<dbReference type="EMBL" id="CP000308">
    <property type="protein sequence ID" value="ABG16105.1"/>
    <property type="molecule type" value="Genomic_DNA"/>
</dbReference>
<dbReference type="RefSeq" id="WP_002220736.1">
    <property type="nucleotide sequence ID" value="NZ_CP009906.1"/>
</dbReference>
<dbReference type="SMR" id="Q1C0B7"/>
<dbReference type="GeneID" id="97458397"/>
<dbReference type="KEGG" id="ypa:YPA_4144"/>
<dbReference type="Proteomes" id="UP000001971">
    <property type="component" value="Chromosome"/>
</dbReference>
<dbReference type="GO" id="GO:1990904">
    <property type="term" value="C:ribonucleoprotein complex"/>
    <property type="evidence" value="ECO:0007669"/>
    <property type="project" value="UniProtKB-KW"/>
</dbReference>
<dbReference type="GO" id="GO:0005840">
    <property type="term" value="C:ribosome"/>
    <property type="evidence" value="ECO:0007669"/>
    <property type="project" value="UniProtKB-KW"/>
</dbReference>
<dbReference type="GO" id="GO:0003735">
    <property type="term" value="F:structural constituent of ribosome"/>
    <property type="evidence" value="ECO:0007669"/>
    <property type="project" value="InterPro"/>
</dbReference>
<dbReference type="GO" id="GO:0006412">
    <property type="term" value="P:translation"/>
    <property type="evidence" value="ECO:0007669"/>
    <property type="project" value="UniProtKB-UniRule"/>
</dbReference>
<dbReference type="FunFam" id="1.10.287.3980:FF:000001">
    <property type="entry name" value="Mitochondrial ribosomal protein L34"/>
    <property type="match status" value="1"/>
</dbReference>
<dbReference type="Gene3D" id="1.10.287.3980">
    <property type="match status" value="1"/>
</dbReference>
<dbReference type="HAMAP" id="MF_00391">
    <property type="entry name" value="Ribosomal_bL34"/>
    <property type="match status" value="1"/>
</dbReference>
<dbReference type="InterPro" id="IPR000271">
    <property type="entry name" value="Ribosomal_bL34"/>
</dbReference>
<dbReference type="InterPro" id="IPR020939">
    <property type="entry name" value="Ribosomal_bL34_CS"/>
</dbReference>
<dbReference type="NCBIfam" id="TIGR01030">
    <property type="entry name" value="rpmH_bact"/>
    <property type="match status" value="1"/>
</dbReference>
<dbReference type="PANTHER" id="PTHR14503:SF4">
    <property type="entry name" value="LARGE RIBOSOMAL SUBUNIT PROTEIN BL34M"/>
    <property type="match status" value="1"/>
</dbReference>
<dbReference type="PANTHER" id="PTHR14503">
    <property type="entry name" value="MITOCHONDRIAL RIBOSOMAL PROTEIN 34 FAMILY MEMBER"/>
    <property type="match status" value="1"/>
</dbReference>
<dbReference type="Pfam" id="PF00468">
    <property type="entry name" value="Ribosomal_L34"/>
    <property type="match status" value="1"/>
</dbReference>
<dbReference type="PROSITE" id="PS00784">
    <property type="entry name" value="RIBOSOMAL_L34"/>
    <property type="match status" value="1"/>
</dbReference>
<name>RL34_YERPA</name>